<feature type="signal peptide" evidence="2">
    <location>
        <begin position="1"/>
        <end position="22"/>
    </location>
</feature>
<feature type="chain" id="PRO_0000363410" description="GDSL esterase/lipase At4g18970">
    <location>
        <begin position="23"/>
        <end position="361"/>
    </location>
</feature>
<feature type="active site" description="Nucleophile" evidence="1">
    <location>
        <position position="35"/>
    </location>
</feature>
<feature type="active site" evidence="1">
    <location>
        <position position="325"/>
    </location>
</feature>
<feature type="active site" evidence="1">
    <location>
        <position position="328"/>
    </location>
</feature>
<accession>Q93YW8</accession>
<accession>O49410</accession>
<accession>Q8L9V8</accession>
<comment type="subcellular location">
    <subcellularLocation>
        <location evidence="1">Secreted</location>
    </subcellularLocation>
</comment>
<comment type="alternative products">
    <event type="alternative splicing"/>
    <isoform>
        <id>Q93YW8-1</id>
        <name>1</name>
        <sequence type="displayed"/>
    </isoform>
    <text>A number of isoforms are produced. According to EST sequences.</text>
</comment>
<comment type="similarity">
    <text evidence="3">Belongs to the 'GDSL' lipolytic enzyme family.</text>
</comment>
<comment type="sequence caution" evidence="3">
    <conflict type="erroneous gene model prediction">
        <sequence resource="EMBL-CDS" id="CAA16754"/>
    </conflict>
    <text>The predicted gene has been split into 2 genes: At4g18970 and At4g18975.</text>
</comment>
<comment type="sequence caution" evidence="3">
    <conflict type="erroneous gene model prediction">
        <sequence resource="EMBL-CDS" id="CAB78899"/>
    </conflict>
    <text>The predicted gene has been split into 2 genes: At4g18970 and At4g18975.</text>
</comment>
<sequence>MARVCVMMMAMAIAMAMNIAMGDPIAPCYFIFGDSLVDSGNNNRLTSLARANYFPYGIDFQYGPTGRFSNGKTTVDVITELLGFDDYITPYSEARGEDILRGVNYASAAAGIREETGRQLGARITFAGQVANHVNTVSQVVNILGDENEAANYLSKCIYSIGLGSNDYLNNYFMPVYYSTGSQYSPDAYANDLINRYTEQLRIMYNNGARKFALVGIGAIGCSPNELAQNSRDGVTCDERINSANRIFNSKLVSLVDHFNQNTPGAKFTYINAYGIFQDMVANPSRYGFRVTNAGCCGVGRNNGQITCLPGQAPCLNRDEYVFWDAFHPGEAANVVIGSRSFQRESASDAHPYDIQQLARL</sequence>
<reference key="1">
    <citation type="journal article" date="1999" name="Nature">
        <title>Sequence and analysis of chromosome 4 of the plant Arabidopsis thaliana.</title>
        <authorList>
            <person name="Mayer K.F.X."/>
            <person name="Schueller C."/>
            <person name="Wambutt R."/>
            <person name="Murphy G."/>
            <person name="Volckaert G."/>
            <person name="Pohl T."/>
            <person name="Duesterhoeft A."/>
            <person name="Stiekema W."/>
            <person name="Entian K.-D."/>
            <person name="Terryn N."/>
            <person name="Harris B."/>
            <person name="Ansorge W."/>
            <person name="Brandt P."/>
            <person name="Grivell L.A."/>
            <person name="Rieger M."/>
            <person name="Weichselgartner M."/>
            <person name="de Simone V."/>
            <person name="Obermaier B."/>
            <person name="Mache R."/>
            <person name="Mueller M."/>
            <person name="Kreis M."/>
            <person name="Delseny M."/>
            <person name="Puigdomenech P."/>
            <person name="Watson M."/>
            <person name="Schmidtheini T."/>
            <person name="Reichert B."/>
            <person name="Portetelle D."/>
            <person name="Perez-Alonso M."/>
            <person name="Boutry M."/>
            <person name="Bancroft I."/>
            <person name="Vos P."/>
            <person name="Hoheisel J."/>
            <person name="Zimmermann W."/>
            <person name="Wedler H."/>
            <person name="Ridley P."/>
            <person name="Langham S.-A."/>
            <person name="McCullagh B."/>
            <person name="Bilham L."/>
            <person name="Robben J."/>
            <person name="van der Schueren J."/>
            <person name="Grymonprez B."/>
            <person name="Chuang Y.-J."/>
            <person name="Vandenbussche F."/>
            <person name="Braeken M."/>
            <person name="Weltjens I."/>
            <person name="Voet M."/>
            <person name="Bastiaens I."/>
            <person name="Aert R."/>
            <person name="Defoor E."/>
            <person name="Weitzenegger T."/>
            <person name="Bothe G."/>
            <person name="Ramsperger U."/>
            <person name="Hilbert H."/>
            <person name="Braun M."/>
            <person name="Holzer E."/>
            <person name="Brandt A."/>
            <person name="Peters S."/>
            <person name="van Staveren M."/>
            <person name="Dirkse W."/>
            <person name="Mooijman P."/>
            <person name="Klein Lankhorst R."/>
            <person name="Rose M."/>
            <person name="Hauf J."/>
            <person name="Koetter P."/>
            <person name="Berneiser S."/>
            <person name="Hempel S."/>
            <person name="Feldpausch M."/>
            <person name="Lamberth S."/>
            <person name="Van den Daele H."/>
            <person name="De Keyser A."/>
            <person name="Buysshaert C."/>
            <person name="Gielen J."/>
            <person name="Villarroel R."/>
            <person name="De Clercq R."/>
            <person name="van Montagu M."/>
            <person name="Rogers J."/>
            <person name="Cronin A."/>
            <person name="Quail M.A."/>
            <person name="Bray-Allen S."/>
            <person name="Clark L."/>
            <person name="Doggett J."/>
            <person name="Hall S."/>
            <person name="Kay M."/>
            <person name="Lennard N."/>
            <person name="McLay K."/>
            <person name="Mayes R."/>
            <person name="Pettett A."/>
            <person name="Rajandream M.A."/>
            <person name="Lyne M."/>
            <person name="Benes V."/>
            <person name="Rechmann S."/>
            <person name="Borkova D."/>
            <person name="Bloecker H."/>
            <person name="Scharfe M."/>
            <person name="Grimm M."/>
            <person name="Loehnert T.-H."/>
            <person name="Dose S."/>
            <person name="de Haan M."/>
            <person name="Maarse A.C."/>
            <person name="Schaefer M."/>
            <person name="Mueller-Auer S."/>
            <person name="Gabel C."/>
            <person name="Fuchs M."/>
            <person name="Fartmann B."/>
            <person name="Granderath K."/>
            <person name="Dauner D."/>
            <person name="Herzl A."/>
            <person name="Neumann S."/>
            <person name="Argiriou A."/>
            <person name="Vitale D."/>
            <person name="Liguori R."/>
            <person name="Piravandi E."/>
            <person name="Massenet O."/>
            <person name="Quigley F."/>
            <person name="Clabauld G."/>
            <person name="Muendlein A."/>
            <person name="Felber R."/>
            <person name="Schnabl S."/>
            <person name="Hiller R."/>
            <person name="Schmidt W."/>
            <person name="Lecharny A."/>
            <person name="Aubourg S."/>
            <person name="Chefdor F."/>
            <person name="Cooke R."/>
            <person name="Berger C."/>
            <person name="Monfort A."/>
            <person name="Casacuberta E."/>
            <person name="Gibbons T."/>
            <person name="Weber N."/>
            <person name="Vandenbol M."/>
            <person name="Bargues M."/>
            <person name="Terol J."/>
            <person name="Torres A."/>
            <person name="Perez-Perez A."/>
            <person name="Purnelle B."/>
            <person name="Bent E."/>
            <person name="Johnson S."/>
            <person name="Tacon D."/>
            <person name="Jesse T."/>
            <person name="Heijnen L."/>
            <person name="Schwarz S."/>
            <person name="Scholler P."/>
            <person name="Heber S."/>
            <person name="Francs P."/>
            <person name="Bielke C."/>
            <person name="Frishman D."/>
            <person name="Haase D."/>
            <person name="Lemcke K."/>
            <person name="Mewes H.-W."/>
            <person name="Stocker S."/>
            <person name="Zaccaria P."/>
            <person name="Bevan M."/>
            <person name="Wilson R.K."/>
            <person name="de la Bastide M."/>
            <person name="Habermann K."/>
            <person name="Parnell L."/>
            <person name="Dedhia N."/>
            <person name="Gnoj L."/>
            <person name="Schutz K."/>
            <person name="Huang E."/>
            <person name="Spiegel L."/>
            <person name="Sekhon M."/>
            <person name="Murray J."/>
            <person name="Sheet P."/>
            <person name="Cordes M."/>
            <person name="Abu-Threideh J."/>
            <person name="Stoneking T."/>
            <person name="Kalicki J."/>
            <person name="Graves T."/>
            <person name="Harmon G."/>
            <person name="Edwards J."/>
            <person name="Latreille P."/>
            <person name="Courtney L."/>
            <person name="Cloud J."/>
            <person name="Abbott A."/>
            <person name="Scott K."/>
            <person name="Johnson D."/>
            <person name="Minx P."/>
            <person name="Bentley D."/>
            <person name="Fulton B."/>
            <person name="Miller N."/>
            <person name="Greco T."/>
            <person name="Kemp K."/>
            <person name="Kramer J."/>
            <person name="Fulton L."/>
            <person name="Mardis E."/>
            <person name="Dante M."/>
            <person name="Pepin K."/>
            <person name="Hillier L.W."/>
            <person name="Nelson J."/>
            <person name="Spieth J."/>
            <person name="Ryan E."/>
            <person name="Andrews S."/>
            <person name="Geisel C."/>
            <person name="Layman D."/>
            <person name="Du H."/>
            <person name="Ali J."/>
            <person name="Berghoff A."/>
            <person name="Jones K."/>
            <person name="Drone K."/>
            <person name="Cotton M."/>
            <person name="Joshu C."/>
            <person name="Antonoiu B."/>
            <person name="Zidanic M."/>
            <person name="Strong C."/>
            <person name="Sun H."/>
            <person name="Lamar B."/>
            <person name="Yordan C."/>
            <person name="Ma P."/>
            <person name="Zhong J."/>
            <person name="Preston R."/>
            <person name="Vil D."/>
            <person name="Shekher M."/>
            <person name="Matero A."/>
            <person name="Shah R."/>
            <person name="Swaby I.K."/>
            <person name="O'Shaughnessy A."/>
            <person name="Rodriguez M."/>
            <person name="Hoffman J."/>
            <person name="Till S."/>
            <person name="Granat S."/>
            <person name="Shohdy N."/>
            <person name="Hasegawa A."/>
            <person name="Hameed A."/>
            <person name="Lodhi M."/>
            <person name="Johnson A."/>
            <person name="Chen E."/>
            <person name="Marra M.A."/>
            <person name="Martienssen R."/>
            <person name="McCombie W.R."/>
        </authorList>
    </citation>
    <scope>NUCLEOTIDE SEQUENCE [LARGE SCALE GENOMIC DNA]</scope>
    <source>
        <strain>cv. Columbia</strain>
    </source>
</reference>
<reference key="2">
    <citation type="journal article" date="2017" name="Plant J.">
        <title>Araport11: a complete reannotation of the Arabidopsis thaliana reference genome.</title>
        <authorList>
            <person name="Cheng C.Y."/>
            <person name="Krishnakumar V."/>
            <person name="Chan A.P."/>
            <person name="Thibaud-Nissen F."/>
            <person name="Schobel S."/>
            <person name="Town C.D."/>
        </authorList>
    </citation>
    <scope>GENOME REANNOTATION</scope>
    <source>
        <strain>cv. Columbia</strain>
    </source>
</reference>
<reference key="3">
    <citation type="journal article" date="2003" name="Science">
        <title>Empirical analysis of transcriptional activity in the Arabidopsis genome.</title>
        <authorList>
            <person name="Yamada K."/>
            <person name="Lim J."/>
            <person name="Dale J.M."/>
            <person name="Chen H."/>
            <person name="Shinn P."/>
            <person name="Palm C.J."/>
            <person name="Southwick A.M."/>
            <person name="Wu H.C."/>
            <person name="Kim C.J."/>
            <person name="Nguyen M."/>
            <person name="Pham P.K."/>
            <person name="Cheuk R.F."/>
            <person name="Karlin-Newmann G."/>
            <person name="Liu S.X."/>
            <person name="Lam B."/>
            <person name="Sakano H."/>
            <person name="Wu T."/>
            <person name="Yu G."/>
            <person name="Miranda M."/>
            <person name="Quach H.L."/>
            <person name="Tripp M."/>
            <person name="Chang C.H."/>
            <person name="Lee J.M."/>
            <person name="Toriumi M.J."/>
            <person name="Chan M.M."/>
            <person name="Tang C.C."/>
            <person name="Onodera C.S."/>
            <person name="Deng J.M."/>
            <person name="Akiyama K."/>
            <person name="Ansari Y."/>
            <person name="Arakawa T."/>
            <person name="Banh J."/>
            <person name="Banno F."/>
            <person name="Bowser L."/>
            <person name="Brooks S.Y."/>
            <person name="Carninci P."/>
            <person name="Chao Q."/>
            <person name="Choy N."/>
            <person name="Enju A."/>
            <person name="Goldsmith A.D."/>
            <person name="Gurjal M."/>
            <person name="Hansen N.F."/>
            <person name="Hayashizaki Y."/>
            <person name="Johnson-Hopson C."/>
            <person name="Hsuan V.W."/>
            <person name="Iida K."/>
            <person name="Karnes M."/>
            <person name="Khan S."/>
            <person name="Koesema E."/>
            <person name="Ishida J."/>
            <person name="Jiang P.X."/>
            <person name="Jones T."/>
            <person name="Kawai J."/>
            <person name="Kamiya A."/>
            <person name="Meyers C."/>
            <person name="Nakajima M."/>
            <person name="Narusaka M."/>
            <person name="Seki M."/>
            <person name="Sakurai T."/>
            <person name="Satou M."/>
            <person name="Tamse R."/>
            <person name="Vaysberg M."/>
            <person name="Wallender E.K."/>
            <person name="Wong C."/>
            <person name="Yamamura Y."/>
            <person name="Yuan S."/>
            <person name="Shinozaki K."/>
            <person name="Davis R.W."/>
            <person name="Theologis A."/>
            <person name="Ecker J.R."/>
        </authorList>
    </citation>
    <scope>NUCLEOTIDE SEQUENCE [LARGE SCALE MRNA]</scope>
    <source>
        <strain>cv. Columbia</strain>
    </source>
</reference>
<reference key="4">
    <citation type="submission" date="2002-03" db="EMBL/GenBank/DDBJ databases">
        <title>Full-length cDNA from Arabidopsis thaliana.</title>
        <authorList>
            <person name="Brover V.V."/>
            <person name="Troukhan M.E."/>
            <person name="Alexandrov N.A."/>
            <person name="Lu Y.-P."/>
            <person name="Flavell R.B."/>
            <person name="Feldmann K.A."/>
        </authorList>
    </citation>
    <scope>NUCLEOTIDE SEQUENCE [LARGE SCALE MRNA]</scope>
</reference>
<reference key="5">
    <citation type="journal article" date="2004" name="Prog. Lipid Res.">
        <title>GDSL family of serine esterases/lipases.</title>
        <authorList>
            <person name="Akoh C.C."/>
            <person name="Lee G.-C."/>
            <person name="Liaw Y.-C."/>
            <person name="Huang T.-H."/>
            <person name="Shaw J.-F."/>
        </authorList>
    </citation>
    <scope>REVIEW</scope>
</reference>
<reference key="6">
    <citation type="journal article" date="2008" name="Pak. J. Biol. Sci.">
        <title>Sequence analysis of GDSL lipase gene family in Arabidopsis thaliana.</title>
        <authorList>
            <person name="Ling H."/>
        </authorList>
    </citation>
    <scope>GENE FAMILY</scope>
</reference>
<keyword id="KW-0025">Alternative splicing</keyword>
<keyword id="KW-0378">Hydrolase</keyword>
<keyword id="KW-0442">Lipid degradation</keyword>
<keyword id="KW-0443">Lipid metabolism</keyword>
<keyword id="KW-1185">Reference proteome</keyword>
<keyword id="KW-0964">Secreted</keyword>
<keyword id="KW-0732">Signal</keyword>
<dbReference type="EC" id="3.1.1.-"/>
<dbReference type="EMBL" id="AL021711">
    <property type="protein sequence ID" value="CAA16754.1"/>
    <property type="status" value="ALT_SEQ"/>
    <property type="molecule type" value="Genomic_DNA"/>
</dbReference>
<dbReference type="EMBL" id="AL161549">
    <property type="protein sequence ID" value="CAB78899.1"/>
    <property type="status" value="ALT_SEQ"/>
    <property type="molecule type" value="Genomic_DNA"/>
</dbReference>
<dbReference type="EMBL" id="CP002687">
    <property type="protein sequence ID" value="AEE84113.1"/>
    <property type="molecule type" value="Genomic_DNA"/>
</dbReference>
<dbReference type="EMBL" id="AY059733">
    <property type="protein sequence ID" value="AAL24090.1"/>
    <property type="molecule type" value="mRNA"/>
</dbReference>
<dbReference type="EMBL" id="AY113950">
    <property type="protein sequence ID" value="AAM44998.1"/>
    <property type="molecule type" value="mRNA"/>
</dbReference>
<dbReference type="EMBL" id="AY088196">
    <property type="protein sequence ID" value="AAM67249.1"/>
    <property type="molecule type" value="mRNA"/>
</dbReference>
<dbReference type="RefSeq" id="NP_567570.1">
    <molecule id="Q93YW8-1"/>
    <property type="nucleotide sequence ID" value="NM_118014.4"/>
</dbReference>
<dbReference type="SMR" id="Q93YW8"/>
<dbReference type="FunCoup" id="Q93YW8">
    <property type="interactions" value="121"/>
</dbReference>
<dbReference type="STRING" id="3702.Q93YW8"/>
<dbReference type="PaxDb" id="3702-AT4G18970.2"/>
<dbReference type="ProteomicsDB" id="221984">
    <molecule id="Q93YW8-1"/>
</dbReference>
<dbReference type="EnsemblPlants" id="AT4G18970.1">
    <molecule id="Q93YW8-1"/>
    <property type="protein sequence ID" value="AT4G18970.1"/>
    <property type="gene ID" value="AT4G18970"/>
</dbReference>
<dbReference type="GeneID" id="827632"/>
<dbReference type="Gramene" id="AT4G18970.1">
    <molecule id="Q93YW8-1"/>
    <property type="protein sequence ID" value="AT4G18970.1"/>
    <property type="gene ID" value="AT4G18970"/>
</dbReference>
<dbReference type="KEGG" id="ath:AT4G18970"/>
<dbReference type="Araport" id="AT4G18970"/>
<dbReference type="TAIR" id="AT4G18970"/>
<dbReference type="eggNOG" id="KOG0017">
    <property type="taxonomic scope" value="Eukaryota"/>
</dbReference>
<dbReference type="HOGENOM" id="CLU_015101_0_0_1"/>
<dbReference type="InParanoid" id="Q93YW8"/>
<dbReference type="OMA" id="HPYDIRT"/>
<dbReference type="OrthoDB" id="1600564at2759"/>
<dbReference type="PhylomeDB" id="Q93YW8"/>
<dbReference type="PRO" id="PR:Q93YW8"/>
<dbReference type="Proteomes" id="UP000006548">
    <property type="component" value="Chromosome 4"/>
</dbReference>
<dbReference type="ExpressionAtlas" id="Q93YW8">
    <property type="expression patterns" value="baseline and differential"/>
</dbReference>
<dbReference type="GO" id="GO:0005576">
    <property type="term" value="C:extracellular region"/>
    <property type="evidence" value="ECO:0007669"/>
    <property type="project" value="UniProtKB-SubCell"/>
</dbReference>
<dbReference type="GO" id="GO:0016788">
    <property type="term" value="F:hydrolase activity, acting on ester bonds"/>
    <property type="evidence" value="ECO:0007669"/>
    <property type="project" value="InterPro"/>
</dbReference>
<dbReference type="GO" id="GO:0016042">
    <property type="term" value="P:lipid catabolic process"/>
    <property type="evidence" value="ECO:0007669"/>
    <property type="project" value="UniProtKB-KW"/>
</dbReference>
<dbReference type="CDD" id="cd01837">
    <property type="entry name" value="SGNH_plant_lipase_like"/>
    <property type="match status" value="1"/>
</dbReference>
<dbReference type="Gene3D" id="3.40.50.1110">
    <property type="entry name" value="SGNH hydrolase"/>
    <property type="match status" value="1"/>
</dbReference>
<dbReference type="InterPro" id="IPR001087">
    <property type="entry name" value="GDSL"/>
</dbReference>
<dbReference type="InterPro" id="IPR051238">
    <property type="entry name" value="GDSL_esterase/lipase"/>
</dbReference>
<dbReference type="InterPro" id="IPR036514">
    <property type="entry name" value="SGNH_hydro_sf"/>
</dbReference>
<dbReference type="InterPro" id="IPR035669">
    <property type="entry name" value="SGNH_plant_lipase-like"/>
</dbReference>
<dbReference type="PANTHER" id="PTHR45650">
    <property type="entry name" value="GDSL-LIKE LIPASE/ACYLHYDROLASE-RELATED"/>
    <property type="match status" value="1"/>
</dbReference>
<dbReference type="PANTHER" id="PTHR45650:SF20">
    <property type="entry name" value="GENOME ASSEMBLY, CHROMOSOME: A03"/>
    <property type="match status" value="1"/>
</dbReference>
<dbReference type="Pfam" id="PF00657">
    <property type="entry name" value="Lipase_GDSL"/>
    <property type="match status" value="1"/>
</dbReference>
<proteinExistence type="evidence at transcript level"/>
<organism>
    <name type="scientific">Arabidopsis thaliana</name>
    <name type="common">Mouse-ear cress</name>
    <dbReference type="NCBI Taxonomy" id="3702"/>
    <lineage>
        <taxon>Eukaryota</taxon>
        <taxon>Viridiplantae</taxon>
        <taxon>Streptophyta</taxon>
        <taxon>Embryophyta</taxon>
        <taxon>Tracheophyta</taxon>
        <taxon>Spermatophyta</taxon>
        <taxon>Magnoliopsida</taxon>
        <taxon>eudicotyledons</taxon>
        <taxon>Gunneridae</taxon>
        <taxon>Pentapetalae</taxon>
        <taxon>rosids</taxon>
        <taxon>malvids</taxon>
        <taxon>Brassicales</taxon>
        <taxon>Brassicaceae</taxon>
        <taxon>Camelineae</taxon>
        <taxon>Arabidopsis</taxon>
    </lineage>
</organism>
<evidence type="ECO:0000250" key="1"/>
<evidence type="ECO:0000255" key="2"/>
<evidence type="ECO:0000305" key="3"/>
<name>GDL65_ARATH</name>
<protein>
    <recommendedName>
        <fullName>GDSL esterase/lipase At4g18970</fullName>
        <ecNumber>3.1.1.-</ecNumber>
    </recommendedName>
    <alternativeName>
        <fullName>Extracellular lipase At4g18970</fullName>
    </alternativeName>
</protein>
<gene>
    <name type="ordered locus">At4g18970</name>
    <name type="ORF">F13C5.1</name>
</gene>